<sequence length="275" mass="30847">MLQRSVFFLSDRTGITAETLGHSLLTQFDGIEWKKHYASFLDSAAKVQEIIDRINTIAKQEGQPSLVFSTLLDPVILASVRQADCYLIDFFESCLGVLETALQQSPVRIPGRSHILGQDASYFRRIAAIQYALNSDDGSNSKILADADVILVGVSRSGKTPVCVYLALQYGVLAANYPFTPEDMGVVRLPSLLQPLREKLFGLTLSTSRLQAVRVERYPGSHYASFVECQRELQWQNELYQQFNIPFIDTTGVSIEEISASIINRMRLERRLYGT</sequence>
<feature type="chain" id="PRO_0000316706" description="Putative phosphoenolpyruvate synthase regulatory protein">
    <location>
        <begin position="1"/>
        <end position="275"/>
    </location>
</feature>
<feature type="binding site" evidence="1">
    <location>
        <begin position="153"/>
        <end position="160"/>
    </location>
    <ligand>
        <name>ADP</name>
        <dbReference type="ChEBI" id="CHEBI:456216"/>
    </ligand>
</feature>
<comment type="function">
    <text evidence="1">Bifunctional serine/threonine kinase and phosphorylase involved in the regulation of the phosphoenolpyruvate synthase (PEPS) by catalyzing its phosphorylation/dephosphorylation.</text>
</comment>
<comment type="catalytic activity">
    <reaction evidence="1">
        <text>[pyruvate, water dikinase] + ADP = [pyruvate, water dikinase]-phosphate + AMP + H(+)</text>
        <dbReference type="Rhea" id="RHEA:46020"/>
        <dbReference type="Rhea" id="RHEA-COMP:11425"/>
        <dbReference type="Rhea" id="RHEA-COMP:11426"/>
        <dbReference type="ChEBI" id="CHEBI:15378"/>
        <dbReference type="ChEBI" id="CHEBI:43176"/>
        <dbReference type="ChEBI" id="CHEBI:68546"/>
        <dbReference type="ChEBI" id="CHEBI:456215"/>
        <dbReference type="ChEBI" id="CHEBI:456216"/>
        <dbReference type="EC" id="2.7.11.33"/>
    </reaction>
</comment>
<comment type="catalytic activity">
    <reaction evidence="1">
        <text>[pyruvate, water dikinase]-phosphate + phosphate + H(+) = [pyruvate, water dikinase] + diphosphate</text>
        <dbReference type="Rhea" id="RHEA:48580"/>
        <dbReference type="Rhea" id="RHEA-COMP:11425"/>
        <dbReference type="Rhea" id="RHEA-COMP:11426"/>
        <dbReference type="ChEBI" id="CHEBI:15378"/>
        <dbReference type="ChEBI" id="CHEBI:33019"/>
        <dbReference type="ChEBI" id="CHEBI:43176"/>
        <dbReference type="ChEBI" id="CHEBI:43474"/>
        <dbReference type="ChEBI" id="CHEBI:68546"/>
        <dbReference type="EC" id="2.7.4.28"/>
    </reaction>
</comment>
<comment type="similarity">
    <text evidence="1">Belongs to the pyruvate, phosphate/water dikinase regulatory protein family. PSRP subfamily.</text>
</comment>
<reference key="1">
    <citation type="journal article" date="2007" name="Environ. Microbiol.">
        <title>Whole-genome analysis of the ammonia-oxidizing bacterium, Nitrosomonas eutropha C91: implications for niche adaptation.</title>
        <authorList>
            <person name="Stein L.Y."/>
            <person name="Arp D.J."/>
            <person name="Berube P.M."/>
            <person name="Chain P.S."/>
            <person name="Hauser L."/>
            <person name="Jetten M.S."/>
            <person name="Klotz M.G."/>
            <person name="Larimer F.W."/>
            <person name="Norton J.M."/>
            <person name="Op den Camp H.J.M."/>
            <person name="Shin M."/>
            <person name="Wei X."/>
        </authorList>
    </citation>
    <scope>NUCLEOTIDE SEQUENCE [LARGE SCALE GENOMIC DNA]</scope>
    <source>
        <strain>DSM 101675 / C91 / Nm57</strain>
    </source>
</reference>
<name>PSRP_NITEC</name>
<evidence type="ECO:0000255" key="1">
    <source>
        <dbReference type="HAMAP-Rule" id="MF_01062"/>
    </source>
</evidence>
<organism>
    <name type="scientific">Nitrosomonas eutropha (strain DSM 101675 / C91 / Nm57)</name>
    <dbReference type="NCBI Taxonomy" id="335283"/>
    <lineage>
        <taxon>Bacteria</taxon>
        <taxon>Pseudomonadati</taxon>
        <taxon>Pseudomonadota</taxon>
        <taxon>Betaproteobacteria</taxon>
        <taxon>Nitrosomonadales</taxon>
        <taxon>Nitrosomonadaceae</taxon>
        <taxon>Nitrosomonas</taxon>
    </lineage>
</organism>
<proteinExistence type="inferred from homology"/>
<dbReference type="EC" id="2.7.11.33" evidence="1"/>
<dbReference type="EC" id="2.7.4.28" evidence="1"/>
<dbReference type="EMBL" id="CP000450">
    <property type="protein sequence ID" value="ABI59132.1"/>
    <property type="molecule type" value="Genomic_DNA"/>
</dbReference>
<dbReference type="RefSeq" id="WP_011633957.1">
    <property type="nucleotide sequence ID" value="NC_008344.1"/>
</dbReference>
<dbReference type="SMR" id="Q0AHQ0"/>
<dbReference type="STRING" id="335283.Neut_0869"/>
<dbReference type="KEGG" id="net:Neut_0869"/>
<dbReference type="eggNOG" id="COG1806">
    <property type="taxonomic scope" value="Bacteria"/>
</dbReference>
<dbReference type="HOGENOM" id="CLU_046206_1_0_4"/>
<dbReference type="OrthoDB" id="9782201at2"/>
<dbReference type="Proteomes" id="UP000001966">
    <property type="component" value="Chromosome"/>
</dbReference>
<dbReference type="GO" id="GO:0043531">
    <property type="term" value="F:ADP binding"/>
    <property type="evidence" value="ECO:0007669"/>
    <property type="project" value="UniProtKB-UniRule"/>
</dbReference>
<dbReference type="GO" id="GO:0005524">
    <property type="term" value="F:ATP binding"/>
    <property type="evidence" value="ECO:0007669"/>
    <property type="project" value="InterPro"/>
</dbReference>
<dbReference type="GO" id="GO:0016776">
    <property type="term" value="F:phosphotransferase activity, phosphate group as acceptor"/>
    <property type="evidence" value="ECO:0007669"/>
    <property type="project" value="UniProtKB-UniRule"/>
</dbReference>
<dbReference type="GO" id="GO:0004674">
    <property type="term" value="F:protein serine/threonine kinase activity"/>
    <property type="evidence" value="ECO:0007669"/>
    <property type="project" value="UniProtKB-UniRule"/>
</dbReference>
<dbReference type="HAMAP" id="MF_01062">
    <property type="entry name" value="PSRP"/>
    <property type="match status" value="1"/>
</dbReference>
<dbReference type="InterPro" id="IPR005177">
    <property type="entry name" value="Kinase-pyrophosphorylase"/>
</dbReference>
<dbReference type="InterPro" id="IPR026530">
    <property type="entry name" value="PSRP"/>
</dbReference>
<dbReference type="NCBIfam" id="NF003742">
    <property type="entry name" value="PRK05339.1"/>
    <property type="match status" value="1"/>
</dbReference>
<dbReference type="PANTHER" id="PTHR31756">
    <property type="entry name" value="PYRUVATE, PHOSPHATE DIKINASE REGULATORY PROTEIN 1, CHLOROPLASTIC"/>
    <property type="match status" value="1"/>
</dbReference>
<dbReference type="PANTHER" id="PTHR31756:SF3">
    <property type="entry name" value="PYRUVATE, PHOSPHATE DIKINASE REGULATORY PROTEIN 1, CHLOROPLASTIC"/>
    <property type="match status" value="1"/>
</dbReference>
<dbReference type="Pfam" id="PF03618">
    <property type="entry name" value="Kinase-PPPase"/>
    <property type="match status" value="1"/>
</dbReference>
<protein>
    <recommendedName>
        <fullName evidence="1">Putative phosphoenolpyruvate synthase regulatory protein</fullName>
        <shortName evidence="1">PEP synthase regulatory protein</shortName>
        <shortName evidence="1">PSRP</shortName>
        <ecNumber evidence="1">2.7.11.33</ecNumber>
        <ecNumber evidence="1">2.7.4.28</ecNumber>
    </recommendedName>
    <alternativeName>
        <fullName evidence="1">Pyruvate, water dikinase regulatory protein</fullName>
    </alternativeName>
</protein>
<gene>
    <name type="ordered locus">Neut_0869</name>
</gene>
<accession>Q0AHQ0</accession>
<keyword id="KW-0418">Kinase</keyword>
<keyword id="KW-0547">Nucleotide-binding</keyword>
<keyword id="KW-0723">Serine/threonine-protein kinase</keyword>
<keyword id="KW-0808">Transferase</keyword>